<accession>C0HJK0</accession>
<feature type="peptide" id="PRO_0000430023" description="U1-poneritoxin-Dq3e" evidence="1">
    <location>
        <begin position="1"/>
        <end position="19"/>
    </location>
</feature>
<feature type="peptide" id="PRO_0000430024" description="U1-poneritoxin-Dq3d" evidence="1">
    <location>
        <begin position="3"/>
        <end position="20"/>
    </location>
</feature>
<feature type="peptide" id="PRO_0000430025" description="U1-poneritoxin-Dq3a/U1-poneritoxin-Dq3b/U1-poneritoxin-Dq3c" evidence="1">
    <location>
        <begin position="3"/>
        <end position="19"/>
    </location>
</feature>
<feature type="modified residue" description="Methionine sulfoxide; in form U1-PONTX-Dq3c" evidence="1">
    <location>
        <position position="18"/>
    </location>
</feature>
<feature type="modified residue" description="Lysine amide; in form U1-PONTX-Dq3a and U1-PONTX-Dq3c" evidence="1">
    <location>
        <position position="19"/>
    </location>
</feature>
<feature type="unsure residue" description="L or I" evidence="1">
    <location>
        <position position="3"/>
    </location>
</feature>
<feature type="unsure residue" description="L or I" evidence="1">
    <location>
        <position position="6"/>
    </location>
</feature>
<feature type="unsure residue" description="L or I" evidence="1">
    <location>
        <position position="10"/>
    </location>
</feature>
<feature type="unsure residue" description="L or I" evidence="1">
    <location>
        <position position="11"/>
    </location>
</feature>
<feature type="unsure residue" description="L or I" evidence="1">
    <location>
        <position position="13"/>
    </location>
</feature>
<feature type="unsure residue" description="L or I" evidence="1">
    <location>
        <position position="17"/>
    </location>
</feature>
<dbReference type="Proteomes" id="UP000515204">
    <property type="component" value="Unplaced"/>
</dbReference>
<dbReference type="GO" id="GO:0005576">
    <property type="term" value="C:extracellular region"/>
    <property type="evidence" value="ECO:0007669"/>
    <property type="project" value="UniProtKB-SubCell"/>
</dbReference>
<sequence>GSLVKLVSTLLSLVPSLMKG</sequence>
<name>TX3AB_DINQU</name>
<keyword id="KW-0027">Amidation</keyword>
<keyword id="KW-0929">Antimicrobial</keyword>
<keyword id="KW-0903">Direct protein sequencing</keyword>
<keyword id="KW-0558">Oxidation</keyword>
<keyword id="KW-1185">Reference proteome</keyword>
<keyword id="KW-0964">Secreted</keyword>
<reference key="1">
    <citation type="journal article" date="2013" name="J. Proteomics">
        <title>Peptidomic comparison and characterization of the major components of the venom of the giant ant Dinoponera quadriceps collected in four different areas of Brazil.</title>
        <authorList>
            <person name="Cologna C.T."/>
            <person name="Cardoso Jdos S."/>
            <person name="Jourdan E."/>
            <person name="Degueldre M."/>
            <person name="Upert G."/>
            <person name="Gilles N."/>
            <person name="Uetanabaro A.P."/>
            <person name="Costa Neto E.M."/>
            <person name="Thonart P."/>
            <person name="de Pauw E."/>
            <person name="Quinton L."/>
        </authorList>
    </citation>
    <scope>PROTEIN SEQUENCE</scope>
    <scope>SUBCELLULAR LOCATION</scope>
    <scope>MASS SPECTROMETRY</scope>
    <scope>OXIDATION AT MET-18</scope>
    <scope>AMIDATION AT LYS-19</scope>
    <source>
        <tissue>Venom</tissue>
    </source>
</reference>
<reference key="2">
    <citation type="journal article" date="2016" name="Toxins">
        <title>The biochemical toxin arsenal from ant venoms.</title>
        <authorList>
            <person name="Touchard A."/>
            <person name="Aili S.R."/>
            <person name="Fox E.G."/>
            <person name="Escoubas P."/>
            <person name="Orivel J."/>
            <person name="Nicholson G.M."/>
            <person name="Dejean A."/>
        </authorList>
    </citation>
    <scope>REVIEW</scope>
    <scope>NOMENCLATURE</scope>
</reference>
<proteinExistence type="evidence at protein level"/>
<protein>
    <recommendedName>
        <fullName evidence="4">Poneritoxin</fullName>
    </recommendedName>
    <alternativeName>
        <fullName evidence="4">Poneratoxin</fullName>
    </alternativeName>
    <alternativeName>
        <fullName evidence="2">Venom peptides</fullName>
    </alternativeName>
    <component>
        <recommendedName>
            <fullName evidence="3">U1-poneritoxin-Dq3e</fullName>
            <shortName evidence="3">U1-PONTX-Dq3e</shortName>
        </recommendedName>
        <alternativeName>
            <fullName evidence="2">Peptide Dq-1984</fullName>
        </alternativeName>
    </component>
    <component>
        <recommendedName>
            <fullName evidence="3">U1-poneritoxin-Dq3d</fullName>
            <shortName evidence="3">U1-PONTX-Dq3d</shortName>
        </recommendedName>
        <alternativeName>
            <fullName evidence="2">Peptide Dq-1897</fullName>
        </alternativeName>
    </component>
    <component>
        <recommendedName>
            <fullName evidence="3">U1-poneritoxin-Dq3a/U1-poneritoxin-Dq3b/U1-poneritoxin-Dq3c</fullName>
            <shortName evidence="3">U1-PONTX-Dq3a/U1-PONTX-Dq3b/U1-PONTX-Dq3c</shortName>
        </recommendedName>
        <alternativeName>
            <fullName evidence="2">Peptide Dq-1839/Dq-1840/Dq-1856</fullName>
        </alternativeName>
    </component>
</protein>
<evidence type="ECO:0000269" key="1">
    <source>
    </source>
</evidence>
<evidence type="ECO:0000303" key="2">
    <source>
    </source>
</evidence>
<evidence type="ECO:0000303" key="3">
    <source>
    </source>
</evidence>
<evidence type="ECO:0000305" key="4"/>
<evidence type="ECO:0000305" key="5">
    <source>
    </source>
</evidence>
<organism>
    <name type="scientific">Dinoponera quadriceps</name>
    <name type="common">South American ant</name>
    <dbReference type="NCBI Taxonomy" id="609295"/>
    <lineage>
        <taxon>Eukaryota</taxon>
        <taxon>Metazoa</taxon>
        <taxon>Ecdysozoa</taxon>
        <taxon>Arthropoda</taxon>
        <taxon>Hexapoda</taxon>
        <taxon>Insecta</taxon>
        <taxon>Pterygota</taxon>
        <taxon>Neoptera</taxon>
        <taxon>Endopterygota</taxon>
        <taxon>Hymenoptera</taxon>
        <taxon>Apocrita</taxon>
        <taxon>Aculeata</taxon>
        <taxon>Formicoidea</taxon>
        <taxon>Formicidae</taxon>
        <taxon>Ponerinae</taxon>
        <taxon>Ponerini</taxon>
        <taxon>Dinoponera</taxon>
    </lineage>
</organism>
<comment type="function">
    <molecule>U1-poneritoxin-Dq3e</molecule>
    <text evidence="4">May have antimicrobial properties, like most ant linear peptides.</text>
</comment>
<comment type="function">
    <molecule>U1-poneritoxin-Dq3d</molecule>
    <text evidence="4">May have antimicrobial properties, like most ant linear peptides.</text>
</comment>
<comment type="function">
    <molecule>U1-poneritoxin-Dq3a/U1-poneritoxin-Dq3b/U1-poneritoxin-Dq3c</molecule>
    <text evidence="4">May have antimicrobial properties, like most ant linear peptides.</text>
</comment>
<comment type="subcellular location">
    <subcellularLocation>
        <location evidence="1">Secreted</location>
    </subcellularLocation>
</comment>
<comment type="tissue specificity">
    <text evidence="5">Expressed by the venom gland.</text>
</comment>
<comment type="PTM">
    <text evidence="1">The peptide spanning residues 2 to 19 occurs in 3 forms and has been given 3 different names. U1-PONTX-Dq3a has an amidated Lys-19, U1-PONTX-Dq3c has an amidated Lys-19 and an oxidized Met-18, and U1-PONTX-Dq3b has no modifications at either Met-18 or Lys-19.</text>
</comment>
<comment type="mass spectrometry">
    <molecule>U1-poneritoxin-Dq3e</molecule>
    <text>U1-PONTX-Dq3e.</text>
</comment>
<comment type="mass spectrometry">
    <molecule>U1-poneritoxin-Dq3d</molecule>
    <text>U1-PONTX-Dq3d.</text>
</comment>
<comment type="mass spectrometry">
    <molecule>U1-poneritoxin-Dq3a/U1-poneritoxin-Dq3b/U1-poneritoxin-Dq3c</molecule>
    <text>U1-PONTX-Dq3a.</text>
</comment>
<comment type="mass spectrometry">
    <molecule>U1-poneritoxin-Dq3a/U1-poneritoxin-Dq3b/U1-poneritoxin-Dq3c</molecule>
    <text>U1-PONTX-Dq3b.</text>
</comment>
<comment type="mass spectrometry">
    <molecule>U1-poneritoxin-Dq3a/U1-poneritoxin-Dq3b/U1-poneritoxin-Dq3c</molecule>
    <text>U1-PONTX-Dq3c.</text>
</comment>